<sequence>MSKVCQVTGKRPVVGNNVSHANNKTKRRFEPNLHHHRFWLESEKRFVRLRLTTKGMRIIDKLGIEKVVADLRAQGQKI</sequence>
<keyword id="KW-0687">Ribonucleoprotein</keyword>
<keyword id="KW-0689">Ribosomal protein</keyword>
<reference key="1">
    <citation type="journal article" date="2004" name="Nucleic Acids Res.">
        <title>Unique features revealed by the genome sequence of Acinetobacter sp. ADP1, a versatile and naturally transformation competent bacterium.</title>
        <authorList>
            <person name="Barbe V."/>
            <person name="Vallenet D."/>
            <person name="Fonknechten N."/>
            <person name="Kreimeyer A."/>
            <person name="Oztas S."/>
            <person name="Labarre L."/>
            <person name="Cruveiller S."/>
            <person name="Robert C."/>
            <person name="Duprat S."/>
            <person name="Wincker P."/>
            <person name="Ornston L.N."/>
            <person name="Weissenbach J."/>
            <person name="Marliere P."/>
            <person name="Cohen G.N."/>
            <person name="Medigue C."/>
        </authorList>
    </citation>
    <scope>NUCLEOTIDE SEQUENCE [LARGE SCALE GENOMIC DNA]</scope>
    <source>
        <strain>ATCC 33305 / BD413 / ADP1</strain>
    </source>
</reference>
<feature type="chain" id="PRO_0000178415" description="Large ribosomal subunit protein bL28">
    <location>
        <begin position="1"/>
        <end position="78"/>
    </location>
</feature>
<proteinExistence type="inferred from homology"/>
<gene>
    <name evidence="1" type="primary">rpmB</name>
    <name type="ordered locus">ACIAD0502</name>
</gene>
<name>RL28_ACIAD</name>
<accession>Q6FES9</accession>
<comment type="similarity">
    <text evidence="1">Belongs to the bacterial ribosomal protein bL28 family.</text>
</comment>
<organism>
    <name type="scientific">Acinetobacter baylyi (strain ATCC 33305 / BD413 / ADP1)</name>
    <dbReference type="NCBI Taxonomy" id="62977"/>
    <lineage>
        <taxon>Bacteria</taxon>
        <taxon>Pseudomonadati</taxon>
        <taxon>Pseudomonadota</taxon>
        <taxon>Gammaproteobacteria</taxon>
        <taxon>Moraxellales</taxon>
        <taxon>Moraxellaceae</taxon>
        <taxon>Acinetobacter</taxon>
    </lineage>
</organism>
<protein>
    <recommendedName>
        <fullName evidence="1">Large ribosomal subunit protein bL28</fullName>
    </recommendedName>
    <alternativeName>
        <fullName evidence="2">50S ribosomal protein L28</fullName>
    </alternativeName>
</protein>
<evidence type="ECO:0000255" key="1">
    <source>
        <dbReference type="HAMAP-Rule" id="MF_00373"/>
    </source>
</evidence>
<evidence type="ECO:0000305" key="2"/>
<dbReference type="EMBL" id="CR543861">
    <property type="protein sequence ID" value="CAG67429.1"/>
    <property type="molecule type" value="Genomic_DNA"/>
</dbReference>
<dbReference type="RefSeq" id="WP_000048256.1">
    <property type="nucleotide sequence ID" value="NC_005966.1"/>
</dbReference>
<dbReference type="SMR" id="Q6FES9"/>
<dbReference type="STRING" id="202950.GCA_001485005_00743"/>
<dbReference type="GeneID" id="97177253"/>
<dbReference type="KEGG" id="aci:ACIAD0502"/>
<dbReference type="eggNOG" id="COG0227">
    <property type="taxonomic scope" value="Bacteria"/>
</dbReference>
<dbReference type="HOGENOM" id="CLU_064548_3_1_6"/>
<dbReference type="OrthoDB" id="9805609at2"/>
<dbReference type="BioCyc" id="ASP62977:ACIAD_RS02280-MONOMER"/>
<dbReference type="Proteomes" id="UP000000430">
    <property type="component" value="Chromosome"/>
</dbReference>
<dbReference type="GO" id="GO:0022625">
    <property type="term" value="C:cytosolic large ribosomal subunit"/>
    <property type="evidence" value="ECO:0007669"/>
    <property type="project" value="TreeGrafter"/>
</dbReference>
<dbReference type="GO" id="GO:0003735">
    <property type="term" value="F:structural constituent of ribosome"/>
    <property type="evidence" value="ECO:0007669"/>
    <property type="project" value="InterPro"/>
</dbReference>
<dbReference type="GO" id="GO:0006412">
    <property type="term" value="P:translation"/>
    <property type="evidence" value="ECO:0007669"/>
    <property type="project" value="UniProtKB-UniRule"/>
</dbReference>
<dbReference type="FunFam" id="2.30.170.40:FF:000001">
    <property type="entry name" value="50S ribosomal protein L28"/>
    <property type="match status" value="1"/>
</dbReference>
<dbReference type="Gene3D" id="2.30.170.40">
    <property type="entry name" value="Ribosomal protein L28/L24"/>
    <property type="match status" value="1"/>
</dbReference>
<dbReference type="HAMAP" id="MF_00373">
    <property type="entry name" value="Ribosomal_bL28"/>
    <property type="match status" value="1"/>
</dbReference>
<dbReference type="InterPro" id="IPR026569">
    <property type="entry name" value="Ribosomal_bL28"/>
</dbReference>
<dbReference type="InterPro" id="IPR034704">
    <property type="entry name" value="Ribosomal_bL28/bL31-like_sf"/>
</dbReference>
<dbReference type="InterPro" id="IPR001383">
    <property type="entry name" value="Ribosomal_bL28_bact-type"/>
</dbReference>
<dbReference type="InterPro" id="IPR037147">
    <property type="entry name" value="Ribosomal_bL28_sf"/>
</dbReference>
<dbReference type="NCBIfam" id="TIGR00009">
    <property type="entry name" value="L28"/>
    <property type="match status" value="1"/>
</dbReference>
<dbReference type="PANTHER" id="PTHR13528">
    <property type="entry name" value="39S RIBOSOMAL PROTEIN L28, MITOCHONDRIAL"/>
    <property type="match status" value="1"/>
</dbReference>
<dbReference type="PANTHER" id="PTHR13528:SF2">
    <property type="entry name" value="LARGE RIBOSOMAL SUBUNIT PROTEIN BL28M"/>
    <property type="match status" value="1"/>
</dbReference>
<dbReference type="Pfam" id="PF00830">
    <property type="entry name" value="Ribosomal_L28"/>
    <property type="match status" value="1"/>
</dbReference>
<dbReference type="SUPFAM" id="SSF143800">
    <property type="entry name" value="L28p-like"/>
    <property type="match status" value="1"/>
</dbReference>